<accession>Q693B1</accession>
<accession>B3KPE0</accession>
<evidence type="ECO:0000269" key="1">
    <source>
    </source>
</evidence>
<evidence type="ECO:0000269" key="2">
    <source>
    </source>
</evidence>
<evidence type="ECO:0000269" key="3">
    <source>
    </source>
</evidence>
<evidence type="ECO:0000269" key="4">
    <source>
    </source>
</evidence>
<evidence type="ECO:0000269" key="5">
    <source>
    </source>
</evidence>
<evidence type="ECO:0000269" key="6">
    <source>
    </source>
</evidence>
<evidence type="ECO:0000303" key="7">
    <source>
    </source>
</evidence>
<evidence type="ECO:0000303" key="8">
    <source>
    </source>
</evidence>
<evidence type="ECO:0000303" key="9">
    <source>
    </source>
</evidence>
<evidence type="ECO:0000305" key="10"/>
<dbReference type="EMBL" id="AY646650">
    <property type="protein sequence ID" value="AAT75307.1"/>
    <property type="molecule type" value="mRNA"/>
</dbReference>
<dbReference type="EMBL" id="AK056227">
    <property type="protein sequence ID" value="BAG51652.1"/>
    <property type="molecule type" value="mRNA"/>
</dbReference>
<dbReference type="EMBL" id="CH471108">
    <property type="protein sequence ID" value="EAW90208.1"/>
    <property type="molecule type" value="Genomic_DNA"/>
</dbReference>
<dbReference type="EMBL" id="BC110598">
    <property type="protein sequence ID" value="AAI10599.1"/>
    <property type="molecule type" value="mRNA"/>
</dbReference>
<dbReference type="CCDS" id="CCDS32545.1">
    <molecule id="Q693B1-1"/>
</dbReference>
<dbReference type="CCDS" id="CCDS92247.1">
    <molecule id="Q693B1-2"/>
</dbReference>
<dbReference type="RefSeq" id="NP_001002914.1">
    <molecule id="Q693B1-1"/>
    <property type="nucleotide sequence ID" value="NM_001002914.3"/>
</dbReference>
<dbReference type="RefSeq" id="NP_001350571.1">
    <molecule id="Q693B1-2"/>
    <property type="nucleotide sequence ID" value="NM_001363642.1"/>
</dbReference>
<dbReference type="SMR" id="Q693B1"/>
<dbReference type="BioGRID" id="127031">
    <property type="interactions" value="7"/>
</dbReference>
<dbReference type="CORUM" id="Q693B1"/>
<dbReference type="FunCoup" id="Q693B1">
    <property type="interactions" value="19"/>
</dbReference>
<dbReference type="IntAct" id="Q693B1">
    <property type="interactions" value="2"/>
</dbReference>
<dbReference type="MINT" id="Q693B1"/>
<dbReference type="STRING" id="9606.ENSP00000495203"/>
<dbReference type="BindingDB" id="Q693B1"/>
<dbReference type="ChEMBL" id="CHEMBL4630837"/>
<dbReference type="GlyGen" id="Q693B1">
    <property type="glycosylation" value="2 sites"/>
</dbReference>
<dbReference type="iPTMnet" id="Q693B1"/>
<dbReference type="PhosphoSitePlus" id="Q693B1"/>
<dbReference type="BioMuta" id="KCTD11"/>
<dbReference type="DMDM" id="74708977"/>
<dbReference type="MassIVE" id="Q693B1"/>
<dbReference type="PaxDb" id="9606-ENSP00000328352"/>
<dbReference type="PeptideAtlas" id="Q693B1"/>
<dbReference type="ProteomicsDB" id="66150">
    <molecule id="Q693B1-1"/>
</dbReference>
<dbReference type="Antibodypedia" id="11945">
    <property type="antibodies" value="125 antibodies from 24 providers"/>
</dbReference>
<dbReference type="DNASU" id="147040"/>
<dbReference type="Ensembl" id="ENST00000333751.8">
    <molecule id="Q693B1-2"/>
    <property type="protein sequence ID" value="ENSP00000328352.5"/>
    <property type="gene ID" value="ENSG00000213859.8"/>
</dbReference>
<dbReference type="Ensembl" id="ENST00000576980.2">
    <molecule id="Q693B1-1"/>
    <property type="protein sequence ID" value="ENSP00000495203.1"/>
    <property type="gene ID" value="ENSG00000213859.8"/>
</dbReference>
<dbReference type="Ensembl" id="ENST00000672140.1">
    <molecule id="Q693B1-1"/>
    <property type="protein sequence ID" value="ENSP00000500224.1"/>
    <property type="gene ID" value="ENSG00000288399.2"/>
</dbReference>
<dbReference type="Ensembl" id="ENST00000673447.2">
    <molecule id="Q693B1-2"/>
    <property type="protein sequence ID" value="ENSP00000500427.2"/>
    <property type="gene ID" value="ENSG00000288399.2"/>
</dbReference>
<dbReference type="GeneID" id="147040"/>
<dbReference type="KEGG" id="hsa:147040"/>
<dbReference type="MANE-Select" id="ENST00000333751.8">
    <molecule id="Q693B1-2"/>
    <property type="protein sequence ID" value="ENSP00000328352.5"/>
    <property type="RefSeq nucleotide sequence ID" value="NM_001363642.1"/>
    <property type="RefSeq protein sequence ID" value="NP_001350571.1"/>
</dbReference>
<dbReference type="UCSC" id="uc002gge.5">
    <molecule id="Q693B1-1"/>
    <property type="organism name" value="human"/>
</dbReference>
<dbReference type="AGR" id="HGNC:21302"/>
<dbReference type="CTD" id="147040"/>
<dbReference type="DisGeNET" id="147040"/>
<dbReference type="GeneCards" id="KCTD11"/>
<dbReference type="HGNC" id="HGNC:21302">
    <property type="gene designation" value="KCTD11"/>
</dbReference>
<dbReference type="HPA" id="ENSG00000213859">
    <property type="expression patterns" value="Low tissue specificity"/>
</dbReference>
<dbReference type="MIM" id="609848">
    <property type="type" value="gene"/>
</dbReference>
<dbReference type="neXtProt" id="NX_Q693B1"/>
<dbReference type="OpenTargets" id="ENSG00000213859"/>
<dbReference type="PharmGKB" id="PA134890547"/>
<dbReference type="VEuPathDB" id="HostDB:ENSG00000213859"/>
<dbReference type="eggNOG" id="KOG2723">
    <property type="taxonomic scope" value="Eukaryota"/>
</dbReference>
<dbReference type="GeneTree" id="ENSGT00940000162799"/>
<dbReference type="HOGENOM" id="CLU_088122_0_0_1"/>
<dbReference type="InParanoid" id="Q693B1"/>
<dbReference type="OMA" id="FRLEWAP"/>
<dbReference type="OrthoDB" id="2414723at2759"/>
<dbReference type="PAN-GO" id="Q693B1">
    <property type="GO annotations" value="1 GO annotation based on evolutionary models"/>
</dbReference>
<dbReference type="PhylomeDB" id="Q693B1"/>
<dbReference type="TreeFam" id="TF315332"/>
<dbReference type="PathwayCommons" id="Q693B1"/>
<dbReference type="SignaLink" id="Q693B1"/>
<dbReference type="SIGNOR" id="Q693B1"/>
<dbReference type="UniPathway" id="UPA00143"/>
<dbReference type="BioGRID-ORCS" id="147040">
    <property type="hits" value="13 hits in 1155 CRISPR screens"/>
</dbReference>
<dbReference type="GenomeRNAi" id="147040"/>
<dbReference type="Pharos" id="Q693B1">
    <property type="development level" value="Tchem"/>
</dbReference>
<dbReference type="PRO" id="PR:Q693B1"/>
<dbReference type="Proteomes" id="UP000005640">
    <property type="component" value="Chromosome 17"/>
</dbReference>
<dbReference type="RNAct" id="Q693B1">
    <property type="molecule type" value="protein"/>
</dbReference>
<dbReference type="Bgee" id="ENSG00000213859">
    <property type="expression patterns" value="Expressed in lower esophagus mucosa and 97 other cell types or tissues"/>
</dbReference>
<dbReference type="ExpressionAtlas" id="Q693B1">
    <property type="expression patterns" value="baseline and differential"/>
</dbReference>
<dbReference type="GO" id="GO:0005737">
    <property type="term" value="C:cytoplasm"/>
    <property type="evidence" value="ECO:0007669"/>
    <property type="project" value="Ensembl"/>
</dbReference>
<dbReference type="GO" id="GO:0042802">
    <property type="term" value="F:identical protein binding"/>
    <property type="evidence" value="ECO:0000353"/>
    <property type="project" value="IntAct"/>
</dbReference>
<dbReference type="GO" id="GO:0016740">
    <property type="term" value="F:transferase activity"/>
    <property type="evidence" value="ECO:0007669"/>
    <property type="project" value="UniProtKB-KW"/>
</dbReference>
<dbReference type="GO" id="GO:0007406">
    <property type="term" value="P:negative regulation of neuroblast proliferation"/>
    <property type="evidence" value="ECO:0007669"/>
    <property type="project" value="Ensembl"/>
</dbReference>
<dbReference type="GO" id="GO:0045879">
    <property type="term" value="P:negative regulation of smoothened signaling pathway"/>
    <property type="evidence" value="ECO:0007669"/>
    <property type="project" value="Ensembl"/>
</dbReference>
<dbReference type="GO" id="GO:0014016">
    <property type="term" value="P:neuroblast differentiation"/>
    <property type="evidence" value="ECO:0007669"/>
    <property type="project" value="Ensembl"/>
</dbReference>
<dbReference type="GO" id="GO:0007405">
    <property type="term" value="P:neuroblast proliferation"/>
    <property type="evidence" value="ECO:0007669"/>
    <property type="project" value="Ensembl"/>
</dbReference>
<dbReference type="GO" id="GO:0030182">
    <property type="term" value="P:neuron differentiation"/>
    <property type="evidence" value="ECO:0007669"/>
    <property type="project" value="Ensembl"/>
</dbReference>
<dbReference type="GO" id="GO:0045666">
    <property type="term" value="P:positive regulation of neuron differentiation"/>
    <property type="evidence" value="ECO:0000318"/>
    <property type="project" value="GO_Central"/>
</dbReference>
<dbReference type="GO" id="GO:0051260">
    <property type="term" value="P:protein homooligomerization"/>
    <property type="evidence" value="ECO:0007669"/>
    <property type="project" value="InterPro"/>
</dbReference>
<dbReference type="GO" id="GO:0016567">
    <property type="term" value="P:protein ubiquitination"/>
    <property type="evidence" value="ECO:0007669"/>
    <property type="project" value="UniProtKB-UniPathway"/>
</dbReference>
<dbReference type="GO" id="GO:0007224">
    <property type="term" value="P:smoothened signaling pathway"/>
    <property type="evidence" value="ECO:0007669"/>
    <property type="project" value="Ensembl"/>
</dbReference>
<dbReference type="FunFam" id="3.30.710.10:FF:000121">
    <property type="entry name" value="BTB/POZ domain-containing protein KCTD11"/>
    <property type="match status" value="1"/>
</dbReference>
<dbReference type="Gene3D" id="3.30.710.10">
    <property type="entry name" value="Potassium Channel Kv1.1, Chain A"/>
    <property type="match status" value="1"/>
</dbReference>
<dbReference type="InterPro" id="IPR045763">
    <property type="entry name" value="KCTD11/21_C"/>
</dbReference>
<dbReference type="InterPro" id="IPR011333">
    <property type="entry name" value="SKP1/BTB/POZ_sf"/>
</dbReference>
<dbReference type="InterPro" id="IPR003131">
    <property type="entry name" value="T1-type_BTB"/>
</dbReference>
<dbReference type="PANTHER" id="PTHR14499:SF7">
    <property type="entry name" value="BTB_POZ DOMAIN-CONTAINING PROTEIN KCTD11"/>
    <property type="match status" value="1"/>
</dbReference>
<dbReference type="PANTHER" id="PTHR14499">
    <property type="entry name" value="POTASSIUM CHANNEL TETRAMERIZATION DOMAIN-CONTAINING"/>
    <property type="match status" value="1"/>
</dbReference>
<dbReference type="Pfam" id="PF02214">
    <property type="entry name" value="BTB_2"/>
    <property type="match status" value="1"/>
</dbReference>
<dbReference type="Pfam" id="PF19329">
    <property type="entry name" value="KCTD11_21_C"/>
    <property type="match status" value="1"/>
</dbReference>
<dbReference type="SUPFAM" id="SSF54695">
    <property type="entry name" value="POZ domain"/>
    <property type="match status" value="1"/>
</dbReference>
<gene>
    <name type="primary">KCTD11</name>
    <name type="synonym">C17orf36</name>
    <name type="synonym">REN</name>
</gene>
<protein>
    <recommendedName>
        <fullName>BTB/POZ domain-containing protein KCTD11</fullName>
    </recommendedName>
    <alternativeName>
        <fullName evidence="9">KCASH1 protein</fullName>
    </alternativeName>
    <alternativeName>
        <fullName>Potassium channel tetramerization domain-containing protein 11</fullName>
    </alternativeName>
    <alternativeName>
        <fullName evidence="7">RING-type E3 ubiquitin transferase subunit KCTD11</fullName>
    </alternativeName>
</protein>
<sequence>MLGAMFRAGTPMPPNLNSQGGGHYFIDRDGKAFRHILNFLRLGRLDLPRGYGETALLRAEADFYQIRPLLDALRELEASQGTPAPTAALLHADVDVSPRLVHFSARRGPHHYELSSVQVDTFRANLFCTDSECLGALRARFGVASGDRAEGSPHFHLEWAPRPVELPEVEYGRLGLQPLWTGGPGERREVVGTPSFLEEVLRVALEHGFRLDSVFPDPEDLLNSRSLRFVRH</sequence>
<reference key="1">
    <citation type="journal article" date="2004" name="Proc. Natl. Acad. Sci. U.S.A.">
        <title>REN(KCTD11) is a suppressor of Hedgehog signaling and is deleted in human medulloblastoma.</title>
        <authorList>
            <person name="Di Marcotullio L."/>
            <person name="Ferretti E."/>
            <person name="De Smaele E."/>
            <person name="Argenti B."/>
            <person name="Mincione C."/>
            <person name="Zazzeroni F."/>
            <person name="Gallo R."/>
            <person name="Masuelli L."/>
            <person name="Napolitano M."/>
            <person name="Maroder M."/>
            <person name="Modesti A."/>
            <person name="Giangaspero F."/>
            <person name="Screpanti I."/>
            <person name="Alesse E."/>
            <person name="Gulino A."/>
        </authorList>
    </citation>
    <scope>NUCLEOTIDE SEQUENCE [MRNA] (ISOFORM 1)</scope>
    <scope>FUNCTION</scope>
    <scope>TISSUE SPECIFICITY</scope>
    <scope>CHARACTERIZATION OF BTB DOMAIN</scope>
    <scope>ROLE IN MEDULLOBLASTOMA DEVELOPMENT</scope>
</reference>
<reference key="2">
    <citation type="journal article" date="2011" name="Biochimie">
        <title>Molecular organization of the cullin E3 ligase adaptor KCTD11.</title>
        <authorList>
            <person name="Correale S."/>
            <person name="Pirone L."/>
            <person name="Di Marcotullio L."/>
            <person name="De Smaele E."/>
            <person name="Greco A."/>
            <person name="Mazza D."/>
            <person name="Moretti M."/>
            <person name="Alterio V."/>
            <person name="Vitagliano L."/>
            <person name="Di Gaetano S."/>
            <person name="Gulino A."/>
            <person name="Pedone E.M."/>
        </authorList>
    </citation>
    <scope>NUCLEOTIDE SEQUENCE [MRNA] (ISOFORM 2)</scope>
    <scope>FUNCTION</scope>
    <scope>ALTERNATIVE INITIATION</scope>
    <scope>USE OF A NON-AUG INITIATOR START CODON</scope>
    <scope>SUBUNIT</scope>
    <scope>INTERACTION WITH CUL3</scope>
</reference>
<reference key="3">
    <citation type="journal article" date="2004" name="Nat. Genet.">
        <title>Complete sequencing and characterization of 21,243 full-length human cDNAs.</title>
        <authorList>
            <person name="Ota T."/>
            <person name="Suzuki Y."/>
            <person name="Nishikawa T."/>
            <person name="Otsuki T."/>
            <person name="Sugiyama T."/>
            <person name="Irie R."/>
            <person name="Wakamatsu A."/>
            <person name="Hayashi K."/>
            <person name="Sato H."/>
            <person name="Nagai K."/>
            <person name="Kimura K."/>
            <person name="Makita H."/>
            <person name="Sekine M."/>
            <person name="Obayashi M."/>
            <person name="Nishi T."/>
            <person name="Shibahara T."/>
            <person name="Tanaka T."/>
            <person name="Ishii S."/>
            <person name="Yamamoto J."/>
            <person name="Saito K."/>
            <person name="Kawai Y."/>
            <person name="Isono Y."/>
            <person name="Nakamura Y."/>
            <person name="Nagahari K."/>
            <person name="Murakami K."/>
            <person name="Yasuda T."/>
            <person name="Iwayanagi T."/>
            <person name="Wagatsuma M."/>
            <person name="Shiratori A."/>
            <person name="Sudo H."/>
            <person name="Hosoiri T."/>
            <person name="Kaku Y."/>
            <person name="Kodaira H."/>
            <person name="Kondo H."/>
            <person name="Sugawara M."/>
            <person name="Takahashi M."/>
            <person name="Kanda K."/>
            <person name="Yokoi T."/>
            <person name="Furuya T."/>
            <person name="Kikkawa E."/>
            <person name="Omura Y."/>
            <person name="Abe K."/>
            <person name="Kamihara K."/>
            <person name="Katsuta N."/>
            <person name="Sato K."/>
            <person name="Tanikawa M."/>
            <person name="Yamazaki M."/>
            <person name="Ninomiya K."/>
            <person name="Ishibashi T."/>
            <person name="Yamashita H."/>
            <person name="Murakawa K."/>
            <person name="Fujimori K."/>
            <person name="Tanai H."/>
            <person name="Kimata M."/>
            <person name="Watanabe M."/>
            <person name="Hiraoka S."/>
            <person name="Chiba Y."/>
            <person name="Ishida S."/>
            <person name="Ono Y."/>
            <person name="Takiguchi S."/>
            <person name="Watanabe S."/>
            <person name="Yosida M."/>
            <person name="Hotuta T."/>
            <person name="Kusano J."/>
            <person name="Kanehori K."/>
            <person name="Takahashi-Fujii A."/>
            <person name="Hara H."/>
            <person name="Tanase T.-O."/>
            <person name="Nomura Y."/>
            <person name="Togiya S."/>
            <person name="Komai F."/>
            <person name="Hara R."/>
            <person name="Takeuchi K."/>
            <person name="Arita M."/>
            <person name="Imose N."/>
            <person name="Musashino K."/>
            <person name="Yuuki H."/>
            <person name="Oshima A."/>
            <person name="Sasaki N."/>
            <person name="Aotsuka S."/>
            <person name="Yoshikawa Y."/>
            <person name="Matsunawa H."/>
            <person name="Ichihara T."/>
            <person name="Shiohata N."/>
            <person name="Sano S."/>
            <person name="Moriya S."/>
            <person name="Momiyama H."/>
            <person name="Satoh N."/>
            <person name="Takami S."/>
            <person name="Terashima Y."/>
            <person name="Suzuki O."/>
            <person name="Nakagawa S."/>
            <person name="Senoh A."/>
            <person name="Mizoguchi H."/>
            <person name="Goto Y."/>
            <person name="Shimizu F."/>
            <person name="Wakebe H."/>
            <person name="Hishigaki H."/>
            <person name="Watanabe T."/>
            <person name="Sugiyama A."/>
            <person name="Takemoto M."/>
            <person name="Kawakami B."/>
            <person name="Yamazaki M."/>
            <person name="Watanabe K."/>
            <person name="Kumagai A."/>
            <person name="Itakura S."/>
            <person name="Fukuzumi Y."/>
            <person name="Fujimori Y."/>
            <person name="Komiyama M."/>
            <person name="Tashiro H."/>
            <person name="Tanigami A."/>
            <person name="Fujiwara T."/>
            <person name="Ono T."/>
            <person name="Yamada K."/>
            <person name="Fujii Y."/>
            <person name="Ozaki K."/>
            <person name="Hirao M."/>
            <person name="Ohmori Y."/>
            <person name="Kawabata A."/>
            <person name="Hikiji T."/>
            <person name="Kobatake N."/>
            <person name="Inagaki H."/>
            <person name="Ikema Y."/>
            <person name="Okamoto S."/>
            <person name="Okitani R."/>
            <person name="Kawakami T."/>
            <person name="Noguchi S."/>
            <person name="Itoh T."/>
            <person name="Shigeta K."/>
            <person name="Senba T."/>
            <person name="Matsumura K."/>
            <person name="Nakajima Y."/>
            <person name="Mizuno T."/>
            <person name="Morinaga M."/>
            <person name="Sasaki M."/>
            <person name="Togashi T."/>
            <person name="Oyama M."/>
            <person name="Hata H."/>
            <person name="Watanabe M."/>
            <person name="Komatsu T."/>
            <person name="Mizushima-Sugano J."/>
            <person name="Satoh T."/>
            <person name="Shirai Y."/>
            <person name="Takahashi Y."/>
            <person name="Nakagawa K."/>
            <person name="Okumura K."/>
            <person name="Nagase T."/>
            <person name="Nomura N."/>
            <person name="Kikuchi H."/>
            <person name="Masuho Y."/>
            <person name="Yamashita R."/>
            <person name="Nakai K."/>
            <person name="Yada T."/>
            <person name="Nakamura Y."/>
            <person name="Ohara O."/>
            <person name="Isogai T."/>
            <person name="Sugano S."/>
        </authorList>
    </citation>
    <scope>NUCLEOTIDE SEQUENCE [LARGE SCALE MRNA] (ISOFORM 1)</scope>
</reference>
<reference key="4">
    <citation type="submission" date="2005-09" db="EMBL/GenBank/DDBJ databases">
        <authorList>
            <person name="Mural R.J."/>
            <person name="Istrail S."/>
            <person name="Sutton G.G."/>
            <person name="Florea L."/>
            <person name="Halpern A.L."/>
            <person name="Mobarry C.M."/>
            <person name="Lippert R."/>
            <person name="Walenz B."/>
            <person name="Shatkay H."/>
            <person name="Dew I."/>
            <person name="Miller J.R."/>
            <person name="Flanigan M.J."/>
            <person name="Edwards N.J."/>
            <person name="Bolanos R."/>
            <person name="Fasulo D."/>
            <person name="Halldorsson B.V."/>
            <person name="Hannenhalli S."/>
            <person name="Turner R."/>
            <person name="Yooseph S."/>
            <person name="Lu F."/>
            <person name="Nusskern D.R."/>
            <person name="Shue B.C."/>
            <person name="Zheng X.H."/>
            <person name="Zhong F."/>
            <person name="Delcher A.L."/>
            <person name="Huson D.H."/>
            <person name="Kravitz S.A."/>
            <person name="Mouchard L."/>
            <person name="Reinert K."/>
            <person name="Remington K.A."/>
            <person name="Clark A.G."/>
            <person name="Waterman M.S."/>
            <person name="Eichler E.E."/>
            <person name="Adams M.D."/>
            <person name="Hunkapiller M.W."/>
            <person name="Myers E.W."/>
            <person name="Venter J.C."/>
        </authorList>
    </citation>
    <scope>NUCLEOTIDE SEQUENCE [LARGE SCALE GENOMIC DNA]</scope>
</reference>
<reference key="5">
    <citation type="journal article" date="2004" name="Genome Res.">
        <title>The status, quality, and expansion of the NIH full-length cDNA project: the Mammalian Gene Collection (MGC).</title>
        <authorList>
            <consortium name="The MGC Project Team"/>
        </authorList>
    </citation>
    <scope>NUCLEOTIDE SEQUENCE [LARGE SCALE MRNA] (ISOFORM 1)</scope>
</reference>
<reference key="6">
    <citation type="journal article" date="2010" name="Nat. Cell Biol.">
        <title>Histone deacetylase and Cullin3-REN(KCTD11) ubiquitin ligase interplay regulates Hedgehog signalling through Gli acetylation.</title>
        <authorList>
            <person name="Canettieri G."/>
            <person name="Di Marcotullio L."/>
            <person name="Greco A."/>
            <person name="Coni S."/>
            <person name="Antonucci L."/>
            <person name="Infante P."/>
            <person name="Pietrosanti L."/>
            <person name="De Smaele E."/>
            <person name="Ferretti E."/>
            <person name="Miele E."/>
            <person name="Pelloni M."/>
            <person name="De Simone G."/>
            <person name="Pedone E.M."/>
            <person name="Gallinari P."/>
            <person name="Giorgi A."/>
            <person name="Steinkuhler C."/>
            <person name="Vitagliano L."/>
            <person name="Pedone C."/>
            <person name="Schinin M.E."/>
            <person name="Screpanti I."/>
            <person name="Gulino A."/>
        </authorList>
    </citation>
    <scope>FUNCTION IN UBIQUITINATION OF HDAC1</scope>
</reference>
<reference key="7">
    <citation type="journal article" date="2011" name="Neoplasia">
        <title>Identification and characterization of KCASH2 and KCASH3, 2 novel Cullin3 adaptors suppressing histone deacetylase and Hedgehog activity in medulloblastoma.</title>
        <authorList>
            <person name="De Smaele E."/>
            <person name="Di Marcotullio L."/>
            <person name="Moretti M."/>
            <person name="Pelloni M."/>
            <person name="Occhione M.A."/>
            <person name="Infante P."/>
            <person name="Cucchi D."/>
            <person name="Greco A."/>
            <person name="Pietrosanti L."/>
            <person name="Todorovic J."/>
            <person name="Coni S."/>
            <person name="Canettieri G."/>
            <person name="Ferretti E."/>
            <person name="Bei R."/>
            <person name="Maroder M."/>
            <person name="Screpanti I."/>
            <person name="Gulino A."/>
        </authorList>
    </citation>
    <scope>SUBUNIT</scope>
</reference>
<reference key="8">
    <citation type="journal article" date="2015" name="PLoS ONE">
        <title>Cullin 3 recognition is not a universal property among KCTD proteins.</title>
        <authorList>
            <person name="Smaldone G."/>
            <person name="Pirone L."/>
            <person name="Balasco N."/>
            <person name="Di Gaetano S."/>
            <person name="Pedone E.M."/>
            <person name="Vitagliano L."/>
        </authorList>
    </citation>
    <scope>INTERACTION WITH CUL3</scope>
</reference>
<reference key="9">
    <citation type="journal article" date="2016" name="FEBS Lett.">
        <title>The BTB domains of the potassium channel tetramerization domain proteins prevalently assume pentameric states.</title>
        <authorList>
            <person name="Smaldone G."/>
            <person name="Pirone L."/>
            <person name="Pedone E."/>
            <person name="Marlovits T."/>
            <person name="Vitagliano L."/>
            <person name="Ciccarelli L."/>
        </authorList>
    </citation>
    <scope>PENTAMERIZATION</scope>
    <scope>ELECTRON MICROSCOPY OF THE OLIGOMERIZED BTB DOMAIN</scope>
</reference>
<comment type="function">
    <text evidence="1 2 3">Plays a role as a marker and a regulator of neuronal differentiation; Up-regulated by a variety of neurogenic signals, such as retinoic acid, epidermal growth factor/EGF and NGFB/nerve growth factor. Induces apoptosis, growth arrest and the expression of cyclin-dependent kinase inhibitor CDKN1B. Plays a role as a tumor repressor and inhibits cell growth and tumorigenicity of medulloblastoma (MDB). Acts as a probable substrate-specific adapter for a BCR (BTB-CUL3-RBX1) E3 ubiquitin-protein ligase complex towards HDAC1. Functions as antagonist of the Hedgehog pathway on cell proliferation and differentiation by affecting the nuclear transfer of transcription factor GLI1, thus maintaining cerebellar granule cells in undifferentiated state, this effect probably occurs via HDAC1 down-regulation, keeping GLI1 acetylated and inactive. When knock-down, Hedgehog antagonism is impaired and proliferation of granule cells is sustained. Activates the caspase cascade.</text>
</comment>
<comment type="pathway">
    <text>Protein modification; protein ubiquitination.</text>
</comment>
<comment type="subunit">
    <text evidence="3 4 5 6">Homopentamer. Interacts with KCTD6 and KCTD21; KCTD11 and KCTD6 or KCTD21 may associate in pentameric assemblies. Component of the BCR(KCTD11) E3 ubiquitin ligase complex, at least composed of CUL3 and KCTD11 and RBX1. Interacts (via BTB domain) with CUL3; initially a 4:4 stoichiometry has been reported, however, electron microscopy revealed pentameric states of the BTB domain.</text>
</comment>
<comment type="interaction">
    <interactant intactId="EBI-12552177">
        <id>Q693B1</id>
    </interactant>
    <interactant intactId="EBI-12552177">
        <id>Q693B1</id>
        <label>KCTD11</label>
    </interactant>
    <organismsDiffer>false</organismsDiffer>
    <experiments>2</experiments>
</comment>
<comment type="alternative products">
    <event type="alternative initiation"/>
    <isoform>
        <id>Q693B1-1</id>
        <name>1</name>
        <name>sKCTD11</name>
        <sequence type="displayed"/>
    </isoform>
    <isoform>
        <id>Q693B1-2</id>
        <name>2</name>
        <name>lKCTD11</name>
        <sequence type="described" ref="VSP_044086"/>
    </isoform>
</comment>
<comment type="tissue specificity">
    <text evidence="1">Higher expression in cerebellum than in whole brain and lower expression in medulloblastoma.</text>
</comment>
<comment type="domain">
    <text>The BTB domain is required for growth-suppressing properties.</text>
</comment>
<comment type="miscellaneous">
    <text>Haploinsufficiency of KCTD11 may be a cause of development of medulloblastoma (MDB). MDB is a malignant, invasive embryonal tumor of the cerebellum with a preferential manifestation in children. An allelic deletion involving genes from chromosome region 17p11.2-pter, sometimes restricted to 17p13.2-13.3, occurs in up to 50% of MDB.</text>
</comment>
<comment type="miscellaneous">
    <molecule>Isoform 2</molecule>
    <text evidence="10">Non-AUG start codon.</text>
</comment>
<comment type="caution">
    <text evidence="5">A N-terminal fragment of KCTD11 isoform 2 (comprising residues 15 - 115) has been used for some KCTD11:CUL3 interaction studies.</text>
</comment>
<feature type="chain" id="PRO_0000248591" description="BTB/POZ domain-containing protein KCTD11">
    <location>
        <begin position="1"/>
        <end position="232"/>
    </location>
</feature>
<feature type="domain" description="BTB">
    <location>
        <begin position="1"/>
        <end position="49"/>
    </location>
</feature>
<feature type="splice variant" id="VSP_044086" description="In isoform 2." evidence="8">
    <original>M</original>
    <variation>MSPPPVPSSPPSFGGPVTLNVGGTLYSTTLETLTRFPDSM</variation>
    <location>
        <position position="1"/>
    </location>
</feature>
<feature type="sequence variant" id="VAR_027354" description="In dbSNP:rs8080182.">
    <original>G</original>
    <variation>S</variation>
    <location>
        <position position="22"/>
    </location>
</feature>
<keyword id="KW-0024">Alternative initiation</keyword>
<keyword id="KW-0131">Cell cycle</keyword>
<keyword id="KW-0217">Developmental protein</keyword>
<keyword id="KW-0341">Growth regulation</keyword>
<keyword id="KW-1267">Proteomics identification</keyword>
<keyword id="KW-1185">Reference proteome</keyword>
<keyword id="KW-0808">Transferase</keyword>
<keyword id="KW-0043">Tumor suppressor</keyword>
<keyword id="KW-0833">Ubl conjugation pathway</keyword>
<organism>
    <name type="scientific">Homo sapiens</name>
    <name type="common">Human</name>
    <dbReference type="NCBI Taxonomy" id="9606"/>
    <lineage>
        <taxon>Eukaryota</taxon>
        <taxon>Metazoa</taxon>
        <taxon>Chordata</taxon>
        <taxon>Craniata</taxon>
        <taxon>Vertebrata</taxon>
        <taxon>Euteleostomi</taxon>
        <taxon>Mammalia</taxon>
        <taxon>Eutheria</taxon>
        <taxon>Euarchontoglires</taxon>
        <taxon>Primates</taxon>
        <taxon>Haplorrhini</taxon>
        <taxon>Catarrhini</taxon>
        <taxon>Hominidae</taxon>
        <taxon>Homo</taxon>
    </lineage>
</organism>
<name>KCD11_HUMAN</name>
<proteinExistence type="evidence at protein level"/>